<proteinExistence type="inferred from homology"/>
<name>OMPA_BUCAP</name>
<comment type="function">
    <text evidence="1">With TolR probably plays a role in maintaining the position of the peptidoglycan cell wall in the periplasm. Acts as a porin with low permeability that allows slow penetration of small solutes; an internal gate slows down solute passage.</text>
</comment>
<comment type="subunit">
    <text evidence="1">Monomer and homodimer.</text>
</comment>
<comment type="subcellular location">
    <subcellularLocation>
        <location evidence="1">Cell outer membrane</location>
        <topology evidence="1">Multi-pass membrane protein</topology>
    </subcellularLocation>
</comment>
<comment type="domain">
    <text evidence="1">The extracellular loops are most variable in sequence, and in some bacteria confer sensitivity to phage and/or colicins.</text>
</comment>
<comment type="similarity">
    <text evidence="1">Belongs to the outer membrane OOP (TC 1.B.6) superfamily. OmpA family.</text>
</comment>
<keyword id="KW-0998">Cell outer membrane</keyword>
<keyword id="KW-1015">Disulfide bond</keyword>
<keyword id="KW-0406">Ion transport</keyword>
<keyword id="KW-0472">Membrane</keyword>
<keyword id="KW-0626">Porin</keyword>
<keyword id="KW-0732">Signal</keyword>
<keyword id="KW-0812">Transmembrane</keyword>
<keyword id="KW-1134">Transmembrane beta strand</keyword>
<keyword id="KW-0813">Transport</keyword>
<reference key="1">
    <citation type="journal article" date="2002" name="Science">
        <title>50 million years of genomic stasis in endosymbiotic bacteria.</title>
        <authorList>
            <person name="Tamas I."/>
            <person name="Klasson L."/>
            <person name="Canbaeck B."/>
            <person name="Naeslund A.K."/>
            <person name="Eriksson A.-S."/>
            <person name="Wernegreen J.J."/>
            <person name="Sandstroem J.P."/>
            <person name="Moran N.A."/>
            <person name="Andersson S.G.E."/>
        </authorList>
    </citation>
    <scope>NUCLEOTIDE SEQUENCE [LARGE SCALE GENOMIC DNA]</scope>
    <source>
        <strain>Sg</strain>
    </source>
</reference>
<sequence>MKKQALTIIFLLVSLVTGIQAKENDHWYLGTKMGWSDFNILEYRSKDITPFDTKIDTKNPLGAPVFGLFLGYEFNPYFSFEIENDTTGFSPHLIFQKNEQNIQINSLQLATKLSYPITDDFHIYTQLGGMMFWDNLSFKKDLQNIFTEKSRLIPNVSLGAEYIFNKKFITRLDYTWKSNIAKIMNLSMKPVLGDVALSFGWKFGKSNINEIFSSYIPQSSDKQYVALNENINFPFNSTELKPISHDKLQKLQKEIKNIKSKNIFIMLSGHADRIGNKEYNQKLSENRAYSIKNYFTSHGISQDKISIQGMGNEFSLTNQICKDVSDRPLLISCLAPDRRVEIEVLSD</sequence>
<protein>
    <recommendedName>
        <fullName evidence="1">Outer membrane protein A</fullName>
    </recommendedName>
    <alternativeName>
        <fullName evidence="1">Outer membrane porin A</fullName>
    </alternativeName>
</protein>
<feature type="signal peptide" evidence="1">
    <location>
        <begin position="1"/>
        <end position="21"/>
    </location>
</feature>
<feature type="chain" id="PRO_0000020106" description="Outer membrane protein A" evidence="1">
    <location>
        <begin position="22"/>
        <end position="347"/>
    </location>
</feature>
<feature type="transmembrane region" description="Beta stranded" evidence="1">
    <location>
        <begin position="26"/>
        <end position="36"/>
    </location>
</feature>
<feature type="transmembrane region" description="Beta stranded" evidence="1">
    <location>
        <begin position="63"/>
        <end position="74"/>
    </location>
</feature>
<feature type="transmembrane region" description="Beta stranded" evidence="1">
    <location>
        <begin position="78"/>
        <end position="86"/>
    </location>
</feature>
<feature type="transmembrane region" description="Beta stranded" evidence="1">
    <location>
        <begin position="105"/>
        <end position="116"/>
    </location>
</feature>
<feature type="transmembrane region" description="Beta stranded" evidence="1">
    <location>
        <begin position="121"/>
        <end position="129"/>
    </location>
</feature>
<feature type="transmembrane region" description="Beta stranded" evidence="1">
    <location>
        <begin position="154"/>
        <end position="163"/>
    </location>
</feature>
<feature type="transmembrane region" description="Beta stranded" evidence="1">
    <location>
        <begin position="168"/>
        <end position="175"/>
    </location>
</feature>
<feature type="transmembrane region" description="Beta stranded" evidence="1">
    <location>
        <begin position="194"/>
        <end position="202"/>
    </location>
</feature>
<feature type="domain" description="OmpA-like" evidence="1">
    <location>
        <begin position="220"/>
        <end position="347"/>
    </location>
</feature>
<feature type="region of interest" description="Hinge-like">
    <location>
        <begin position="207"/>
        <end position="218"/>
    </location>
</feature>
<feature type="site" description="Part of salt bridge gating mechanism" evidence="1">
    <location>
        <position position="81"/>
    </location>
</feature>
<feature type="site" description="Part of salt bridge gating mechanism" evidence="1">
    <location>
        <position position="171"/>
    </location>
</feature>
<feature type="disulfide bond" evidence="1">
    <location>
        <begin position="321"/>
        <end position="333"/>
    </location>
</feature>
<evidence type="ECO:0000255" key="1">
    <source>
        <dbReference type="HAMAP-Rule" id="MF_00842"/>
    </source>
</evidence>
<accession>Q8K9L4</accession>
<dbReference type="EMBL" id="AE013218">
    <property type="protein sequence ID" value="AAM67874.1"/>
    <property type="molecule type" value="Genomic_DNA"/>
</dbReference>
<dbReference type="RefSeq" id="WP_011053841.1">
    <property type="nucleotide sequence ID" value="NC_004061.1"/>
</dbReference>
<dbReference type="SMR" id="Q8K9L4"/>
<dbReference type="STRING" id="198804.BUsg_320"/>
<dbReference type="GeneID" id="93003791"/>
<dbReference type="KEGG" id="bas:BUsg_320"/>
<dbReference type="eggNOG" id="COG2885">
    <property type="taxonomic scope" value="Bacteria"/>
</dbReference>
<dbReference type="eggNOG" id="COG3637">
    <property type="taxonomic scope" value="Bacteria"/>
</dbReference>
<dbReference type="HOGENOM" id="CLU_031536_0_0_6"/>
<dbReference type="Proteomes" id="UP000000416">
    <property type="component" value="Chromosome"/>
</dbReference>
<dbReference type="GO" id="GO:0009279">
    <property type="term" value="C:cell outer membrane"/>
    <property type="evidence" value="ECO:0007669"/>
    <property type="project" value="UniProtKB-SubCell"/>
</dbReference>
<dbReference type="GO" id="GO:0046930">
    <property type="term" value="C:pore complex"/>
    <property type="evidence" value="ECO:0007669"/>
    <property type="project" value="UniProtKB-KW"/>
</dbReference>
<dbReference type="GO" id="GO:0015288">
    <property type="term" value="F:porin activity"/>
    <property type="evidence" value="ECO:0007669"/>
    <property type="project" value="UniProtKB-UniRule"/>
</dbReference>
<dbReference type="GO" id="GO:0034220">
    <property type="term" value="P:monoatomic ion transmembrane transport"/>
    <property type="evidence" value="ECO:0007669"/>
    <property type="project" value="UniProtKB-UniRule"/>
</dbReference>
<dbReference type="CDD" id="cd07185">
    <property type="entry name" value="OmpA_C-like"/>
    <property type="match status" value="1"/>
</dbReference>
<dbReference type="Gene3D" id="2.40.160.20">
    <property type="match status" value="1"/>
</dbReference>
<dbReference type="Gene3D" id="3.30.1330.60">
    <property type="entry name" value="OmpA-like domain"/>
    <property type="match status" value="1"/>
</dbReference>
<dbReference type="HAMAP" id="MF_00842">
    <property type="entry name" value="OmpA"/>
    <property type="match status" value="1"/>
</dbReference>
<dbReference type="InterPro" id="IPR050330">
    <property type="entry name" value="Bact_OuterMem_StrucFunc"/>
</dbReference>
<dbReference type="InterPro" id="IPR011250">
    <property type="entry name" value="OMP/PagP_b-brl"/>
</dbReference>
<dbReference type="InterPro" id="IPR006664">
    <property type="entry name" value="OMP_bac"/>
</dbReference>
<dbReference type="InterPro" id="IPR002368">
    <property type="entry name" value="OmpA"/>
</dbReference>
<dbReference type="InterPro" id="IPR006665">
    <property type="entry name" value="OmpA-like"/>
</dbReference>
<dbReference type="InterPro" id="IPR006690">
    <property type="entry name" value="OMPA-like_CS"/>
</dbReference>
<dbReference type="InterPro" id="IPR036737">
    <property type="entry name" value="OmpA-like_sf"/>
</dbReference>
<dbReference type="InterPro" id="IPR000498">
    <property type="entry name" value="OmpA-like_TM_dom"/>
</dbReference>
<dbReference type="PANTHER" id="PTHR30329:SF21">
    <property type="entry name" value="LIPOPROTEIN YIAD-RELATED"/>
    <property type="match status" value="1"/>
</dbReference>
<dbReference type="PANTHER" id="PTHR30329">
    <property type="entry name" value="STATOR ELEMENT OF FLAGELLAR MOTOR COMPLEX"/>
    <property type="match status" value="1"/>
</dbReference>
<dbReference type="Pfam" id="PF00691">
    <property type="entry name" value="OmpA"/>
    <property type="match status" value="1"/>
</dbReference>
<dbReference type="Pfam" id="PF01389">
    <property type="entry name" value="OmpA_membrane"/>
    <property type="match status" value="1"/>
</dbReference>
<dbReference type="PRINTS" id="PR01021">
    <property type="entry name" value="OMPADOMAIN"/>
</dbReference>
<dbReference type="PRINTS" id="PR01022">
    <property type="entry name" value="OUTRMMBRANEA"/>
</dbReference>
<dbReference type="SUPFAM" id="SSF56925">
    <property type="entry name" value="OMPA-like"/>
    <property type="match status" value="1"/>
</dbReference>
<dbReference type="SUPFAM" id="SSF103088">
    <property type="entry name" value="OmpA-like"/>
    <property type="match status" value="1"/>
</dbReference>
<dbReference type="PROSITE" id="PS01068">
    <property type="entry name" value="OMPA_1"/>
    <property type="match status" value="1"/>
</dbReference>
<dbReference type="PROSITE" id="PS51123">
    <property type="entry name" value="OMPA_2"/>
    <property type="match status" value="1"/>
</dbReference>
<gene>
    <name evidence="1" type="primary">ompA</name>
    <name type="ordered locus">BUsg_320</name>
</gene>
<organism>
    <name type="scientific">Buchnera aphidicola subsp. Schizaphis graminum (strain Sg)</name>
    <dbReference type="NCBI Taxonomy" id="198804"/>
    <lineage>
        <taxon>Bacteria</taxon>
        <taxon>Pseudomonadati</taxon>
        <taxon>Pseudomonadota</taxon>
        <taxon>Gammaproteobacteria</taxon>
        <taxon>Enterobacterales</taxon>
        <taxon>Erwiniaceae</taxon>
        <taxon>Buchnera</taxon>
    </lineage>
</organism>